<comment type="subcellular location">
    <subcellularLocation>
        <location>Membrane</location>
        <topology>Multi-pass membrane protein</topology>
    </subcellularLocation>
</comment>
<comment type="tissue specificity">
    <text>Most abundant in squamous epithelia.</text>
</comment>
<comment type="similarity">
    <text evidence="2">Belongs to the PMP-22/EMP/MP20 family.</text>
</comment>
<gene>
    <name type="primary">EMP1</name>
</gene>
<feature type="chain" id="PRO_0000164656" description="Epithelial membrane protein 1">
    <location>
        <begin position="1"/>
        <end position="160"/>
    </location>
</feature>
<feature type="transmembrane region" description="Helical" evidence="1">
    <location>
        <begin position="1"/>
        <end position="21"/>
    </location>
</feature>
<feature type="transmembrane region" description="Helical" evidence="1">
    <location>
        <begin position="67"/>
        <end position="87"/>
    </location>
</feature>
<feature type="transmembrane region" description="Helical" evidence="1">
    <location>
        <begin position="95"/>
        <end position="115"/>
    </location>
</feature>
<feature type="transmembrane region" description="Helical" evidence="1">
    <location>
        <begin position="137"/>
        <end position="157"/>
    </location>
</feature>
<feature type="glycosylation site" description="N-linked (GlcNAc...) asparagine" evidence="1">
    <location>
        <position position="35"/>
    </location>
</feature>
<feature type="glycosylation site" description="N-linked (GlcNAc...) asparagine" evidence="1">
    <location>
        <position position="43"/>
    </location>
</feature>
<organism>
    <name type="scientific">Oryctolagus cuniculus</name>
    <name type="common">Rabbit</name>
    <dbReference type="NCBI Taxonomy" id="9986"/>
    <lineage>
        <taxon>Eukaryota</taxon>
        <taxon>Metazoa</taxon>
        <taxon>Chordata</taxon>
        <taxon>Craniata</taxon>
        <taxon>Vertebrata</taxon>
        <taxon>Euteleostomi</taxon>
        <taxon>Mammalia</taxon>
        <taxon>Eutheria</taxon>
        <taxon>Euarchontoglires</taxon>
        <taxon>Glires</taxon>
        <taxon>Lagomorpha</taxon>
        <taxon>Leporidae</taxon>
        <taxon>Oryctolagus</taxon>
    </lineage>
</organism>
<evidence type="ECO:0000255" key="1"/>
<evidence type="ECO:0000305" key="2"/>
<dbReference type="EMBL" id="U34200">
    <property type="protein sequence ID" value="AAC48488.1"/>
    <property type="molecule type" value="mRNA"/>
</dbReference>
<dbReference type="RefSeq" id="NP_001075826.1">
    <property type="nucleotide sequence ID" value="NM_001082357.1"/>
</dbReference>
<dbReference type="SMR" id="P54850"/>
<dbReference type="FunCoup" id="P54850">
    <property type="interactions" value="422"/>
</dbReference>
<dbReference type="STRING" id="9986.ENSOCUP00000025750"/>
<dbReference type="GlyCosmos" id="P54850">
    <property type="glycosylation" value="2 sites, No reported glycans"/>
</dbReference>
<dbReference type="PaxDb" id="9986-ENSOCUP00000025750"/>
<dbReference type="GeneID" id="100009209"/>
<dbReference type="KEGG" id="ocu:100009209"/>
<dbReference type="CTD" id="2012"/>
<dbReference type="eggNOG" id="ENOG502S028">
    <property type="taxonomic scope" value="Eukaryota"/>
</dbReference>
<dbReference type="InParanoid" id="P54850"/>
<dbReference type="OrthoDB" id="8678517at2759"/>
<dbReference type="Proteomes" id="UP000001811">
    <property type="component" value="Unplaced"/>
</dbReference>
<dbReference type="GO" id="GO:0005886">
    <property type="term" value="C:plasma membrane"/>
    <property type="evidence" value="ECO:0007669"/>
    <property type="project" value="TreeGrafter"/>
</dbReference>
<dbReference type="FunFam" id="1.20.140.150:FF:000026">
    <property type="entry name" value="Epithelial membrane protein 1"/>
    <property type="match status" value="1"/>
</dbReference>
<dbReference type="Gene3D" id="1.20.140.150">
    <property type="match status" value="1"/>
</dbReference>
<dbReference type="InterPro" id="IPR003932">
    <property type="entry name" value="EMP_1"/>
</dbReference>
<dbReference type="InterPro" id="IPR050579">
    <property type="entry name" value="PMP-22/EMP/MP20-like"/>
</dbReference>
<dbReference type="InterPro" id="IPR004031">
    <property type="entry name" value="PMP22/EMP/MP20/Claudin"/>
</dbReference>
<dbReference type="InterPro" id="IPR004032">
    <property type="entry name" value="PMP22_EMP_MP20"/>
</dbReference>
<dbReference type="PANTHER" id="PTHR10671:SF6">
    <property type="entry name" value="EPITHELIAL MEMBRANE PROTEIN 1"/>
    <property type="match status" value="1"/>
</dbReference>
<dbReference type="PANTHER" id="PTHR10671">
    <property type="entry name" value="EPITHELIAL MEMBRANE PROTEIN-RELATED"/>
    <property type="match status" value="1"/>
</dbReference>
<dbReference type="Pfam" id="PF00822">
    <property type="entry name" value="PMP22_Claudin"/>
    <property type="match status" value="1"/>
</dbReference>
<dbReference type="PRINTS" id="PR01453">
    <property type="entry name" value="EPMEMFAMILY"/>
</dbReference>
<dbReference type="PRINTS" id="PR01454">
    <property type="entry name" value="EPMEMPROT1"/>
</dbReference>
<dbReference type="PROSITE" id="PS01221">
    <property type="entry name" value="PMP22_1"/>
    <property type="match status" value="1"/>
</dbReference>
<dbReference type="PROSITE" id="PS01222">
    <property type="entry name" value="PMP22_2"/>
    <property type="match status" value="1"/>
</dbReference>
<name>EMP1_RABIT</name>
<protein>
    <recommendedName>
        <fullName>Epithelial membrane protein 1</fullName>
        <shortName>EMP-1</shortName>
    </recommendedName>
    <alternativeName>
        <fullName>Squamous cell-specific protein CL-20</fullName>
    </alternativeName>
    <alternativeName>
        <fullName>Tumor-associated membrane protein</fullName>
    </alternativeName>
</protein>
<reference key="1">
    <citation type="journal article" date="1995" name="J. Biol. Chem.">
        <title>Identification and characterization of a novel squamous cell-associated gene related to PMP22.</title>
        <authorList>
            <person name="Marvin K.W."/>
            <person name="Fujimoto W."/>
            <person name="Jetten A.M."/>
        </authorList>
    </citation>
    <scope>NUCLEOTIDE SEQUENCE [MRNA]</scope>
    <source>
        <strain>New Zealand white</strain>
    </source>
</reference>
<proteinExistence type="evidence at transcript level"/>
<keyword id="KW-0325">Glycoprotein</keyword>
<keyword id="KW-0472">Membrane</keyword>
<keyword id="KW-1185">Reference proteome</keyword>
<keyword id="KW-0812">Transmembrane</keyword>
<keyword id="KW-1133">Transmembrane helix</keyword>
<sequence length="160" mass="17758">MLVLLAAIFVVHIATCVMLFVSTIANVWVVSDSINASVGLWRNCTSGDCSGGLSYGHEDALKAVQAFMILSIIFSVISLIIFVFQLFTMEKGNRFFLSGATMLVCWLCVLIGASIYTHRYANGDSNTFDRSHHGYSFILAWICFCFSFVVGVLYLVLRKK</sequence>
<accession>P54850</accession>